<comment type="function">
    <text evidence="1">Associates with the EF-Tu.GDP complex and induces the exchange of GDP to GTP. It remains bound to the aminoacyl-tRNA.EF-Tu.GTP complex up to the GTP hydrolysis stage on the ribosome.</text>
</comment>
<comment type="subcellular location">
    <subcellularLocation>
        <location evidence="1">Cytoplasm</location>
    </subcellularLocation>
</comment>
<comment type="similarity">
    <text evidence="1">Belongs to the EF-Ts family.</text>
</comment>
<sequence length="307" mass="31993">MATITAAMVKDLRETTGVGMMDCKQALTENDGDMQAAIDWLRKKGLSKAAKKAGRVAAEGLIGAVTSGNKGVVVEVNSETDFVARNEQFQGLVKMVAQVALSVGADVEVIKAAKVGSATVETAISDAIATIGENMTLRRAASLEVSKGLVASYVHNAVIDGAGKMGVIVALESSGNADELAALGRQIAMHVASSNPLAIDPSGVDPAVVKREKDILADKFRQQGKPEAMIEKITESGLKTFFKEQTLLEQPFIFDDKKSVGQALKDAEGKVGAPVKLTGFVRYALGEGIEKAESDFAAEVAAAAGQG</sequence>
<proteinExistence type="inferred from homology"/>
<accession>Q1QMN6</accession>
<evidence type="ECO:0000255" key="1">
    <source>
        <dbReference type="HAMAP-Rule" id="MF_00050"/>
    </source>
</evidence>
<keyword id="KW-0963">Cytoplasm</keyword>
<keyword id="KW-0251">Elongation factor</keyword>
<keyword id="KW-0648">Protein biosynthesis</keyword>
<keyword id="KW-1185">Reference proteome</keyword>
<gene>
    <name evidence="1" type="primary">tsf</name>
    <name type="ordered locus">Nham_1695</name>
</gene>
<dbReference type="EMBL" id="CP000319">
    <property type="protein sequence ID" value="ABE62511.1"/>
    <property type="molecule type" value="Genomic_DNA"/>
</dbReference>
<dbReference type="RefSeq" id="WP_011510193.1">
    <property type="nucleotide sequence ID" value="NC_007964.1"/>
</dbReference>
<dbReference type="SMR" id="Q1QMN6"/>
<dbReference type="STRING" id="323097.Nham_1695"/>
<dbReference type="KEGG" id="nha:Nham_1695"/>
<dbReference type="eggNOG" id="COG0264">
    <property type="taxonomic scope" value="Bacteria"/>
</dbReference>
<dbReference type="HOGENOM" id="CLU_047155_2_0_5"/>
<dbReference type="OrthoDB" id="9808348at2"/>
<dbReference type="Proteomes" id="UP000001953">
    <property type="component" value="Chromosome"/>
</dbReference>
<dbReference type="GO" id="GO:0005737">
    <property type="term" value="C:cytoplasm"/>
    <property type="evidence" value="ECO:0007669"/>
    <property type="project" value="UniProtKB-SubCell"/>
</dbReference>
<dbReference type="GO" id="GO:0003746">
    <property type="term" value="F:translation elongation factor activity"/>
    <property type="evidence" value="ECO:0007669"/>
    <property type="project" value="UniProtKB-UniRule"/>
</dbReference>
<dbReference type="CDD" id="cd14275">
    <property type="entry name" value="UBA_EF-Ts"/>
    <property type="match status" value="1"/>
</dbReference>
<dbReference type="FunFam" id="1.10.286.20:FF:000001">
    <property type="entry name" value="Elongation factor Ts"/>
    <property type="match status" value="1"/>
</dbReference>
<dbReference type="FunFam" id="1.10.8.10:FF:000001">
    <property type="entry name" value="Elongation factor Ts"/>
    <property type="match status" value="1"/>
</dbReference>
<dbReference type="Gene3D" id="1.10.286.20">
    <property type="match status" value="1"/>
</dbReference>
<dbReference type="Gene3D" id="1.10.8.10">
    <property type="entry name" value="DNA helicase RuvA subunit, C-terminal domain"/>
    <property type="match status" value="1"/>
</dbReference>
<dbReference type="Gene3D" id="3.30.479.20">
    <property type="entry name" value="Elongation factor Ts, dimerisation domain"/>
    <property type="match status" value="2"/>
</dbReference>
<dbReference type="HAMAP" id="MF_00050">
    <property type="entry name" value="EF_Ts"/>
    <property type="match status" value="1"/>
</dbReference>
<dbReference type="InterPro" id="IPR036402">
    <property type="entry name" value="EF-Ts_dimer_sf"/>
</dbReference>
<dbReference type="InterPro" id="IPR001816">
    <property type="entry name" value="Transl_elong_EFTs/EF1B"/>
</dbReference>
<dbReference type="InterPro" id="IPR014039">
    <property type="entry name" value="Transl_elong_EFTs/EF1B_dimer"/>
</dbReference>
<dbReference type="InterPro" id="IPR018101">
    <property type="entry name" value="Transl_elong_Ts_CS"/>
</dbReference>
<dbReference type="InterPro" id="IPR009060">
    <property type="entry name" value="UBA-like_sf"/>
</dbReference>
<dbReference type="NCBIfam" id="TIGR00116">
    <property type="entry name" value="tsf"/>
    <property type="match status" value="1"/>
</dbReference>
<dbReference type="PANTHER" id="PTHR11741">
    <property type="entry name" value="ELONGATION FACTOR TS"/>
    <property type="match status" value="1"/>
</dbReference>
<dbReference type="PANTHER" id="PTHR11741:SF0">
    <property type="entry name" value="ELONGATION FACTOR TS, MITOCHONDRIAL"/>
    <property type="match status" value="1"/>
</dbReference>
<dbReference type="Pfam" id="PF00889">
    <property type="entry name" value="EF_TS"/>
    <property type="match status" value="1"/>
</dbReference>
<dbReference type="SUPFAM" id="SSF54713">
    <property type="entry name" value="Elongation factor Ts (EF-Ts), dimerisation domain"/>
    <property type="match status" value="2"/>
</dbReference>
<dbReference type="SUPFAM" id="SSF46934">
    <property type="entry name" value="UBA-like"/>
    <property type="match status" value="1"/>
</dbReference>
<dbReference type="PROSITE" id="PS01126">
    <property type="entry name" value="EF_TS_1"/>
    <property type="match status" value="1"/>
</dbReference>
<dbReference type="PROSITE" id="PS01127">
    <property type="entry name" value="EF_TS_2"/>
    <property type="match status" value="1"/>
</dbReference>
<organism>
    <name type="scientific">Nitrobacter hamburgensis (strain DSM 10229 / NCIMB 13809 / X14)</name>
    <dbReference type="NCBI Taxonomy" id="323097"/>
    <lineage>
        <taxon>Bacteria</taxon>
        <taxon>Pseudomonadati</taxon>
        <taxon>Pseudomonadota</taxon>
        <taxon>Alphaproteobacteria</taxon>
        <taxon>Hyphomicrobiales</taxon>
        <taxon>Nitrobacteraceae</taxon>
        <taxon>Nitrobacter</taxon>
    </lineage>
</organism>
<feature type="chain" id="PRO_1000006137" description="Elongation factor Ts">
    <location>
        <begin position="1"/>
        <end position="307"/>
    </location>
</feature>
<feature type="region of interest" description="Involved in Mg(2+) ion dislocation from EF-Tu" evidence="1">
    <location>
        <begin position="80"/>
        <end position="83"/>
    </location>
</feature>
<protein>
    <recommendedName>
        <fullName evidence="1">Elongation factor Ts</fullName>
        <shortName evidence="1">EF-Ts</shortName>
    </recommendedName>
</protein>
<reference key="1">
    <citation type="submission" date="2006-03" db="EMBL/GenBank/DDBJ databases">
        <title>Complete sequence of chromosome of Nitrobacter hamburgensis X14.</title>
        <authorList>
            <consortium name="US DOE Joint Genome Institute"/>
            <person name="Copeland A."/>
            <person name="Lucas S."/>
            <person name="Lapidus A."/>
            <person name="Barry K."/>
            <person name="Detter J.C."/>
            <person name="Glavina del Rio T."/>
            <person name="Hammon N."/>
            <person name="Israni S."/>
            <person name="Dalin E."/>
            <person name="Tice H."/>
            <person name="Pitluck S."/>
            <person name="Chain P."/>
            <person name="Malfatti S."/>
            <person name="Shin M."/>
            <person name="Vergez L."/>
            <person name="Schmutz J."/>
            <person name="Larimer F."/>
            <person name="Land M."/>
            <person name="Hauser L."/>
            <person name="Kyrpides N."/>
            <person name="Ivanova N."/>
            <person name="Ward B."/>
            <person name="Arp D."/>
            <person name="Klotz M."/>
            <person name="Stein L."/>
            <person name="O'Mullan G."/>
            <person name="Starkenburg S."/>
            <person name="Sayavedra L."/>
            <person name="Poret-Peterson A.T."/>
            <person name="Gentry M.E."/>
            <person name="Bruce D."/>
            <person name="Richardson P."/>
        </authorList>
    </citation>
    <scope>NUCLEOTIDE SEQUENCE [LARGE SCALE GENOMIC DNA]</scope>
    <source>
        <strain>DSM 10229 / NCIMB 13809 / X14</strain>
    </source>
</reference>
<name>EFTS_NITHX</name>